<feature type="chain" id="PRO_1000004229" description="Oligoribonuclease">
    <location>
        <begin position="1"/>
        <end position="193"/>
    </location>
</feature>
<feature type="domain" description="Exonuclease" evidence="1">
    <location>
        <begin position="8"/>
        <end position="171"/>
    </location>
</feature>
<feature type="active site" evidence="1">
    <location>
        <position position="129"/>
    </location>
</feature>
<dbReference type="EC" id="3.1.15.-" evidence="1"/>
<dbReference type="EMBL" id="CP000453">
    <property type="protein sequence ID" value="ABI56851.1"/>
    <property type="molecule type" value="Genomic_DNA"/>
</dbReference>
<dbReference type="RefSeq" id="WP_011629246.1">
    <property type="nucleotide sequence ID" value="NC_008340.1"/>
</dbReference>
<dbReference type="SMR" id="Q0A8I6"/>
<dbReference type="KEGG" id="aeh:Mlg_1502"/>
<dbReference type="eggNOG" id="COG1949">
    <property type="taxonomic scope" value="Bacteria"/>
</dbReference>
<dbReference type="HOGENOM" id="CLU_064761_2_0_6"/>
<dbReference type="OrthoDB" id="9801329at2"/>
<dbReference type="Proteomes" id="UP000001962">
    <property type="component" value="Chromosome"/>
</dbReference>
<dbReference type="GO" id="GO:0005737">
    <property type="term" value="C:cytoplasm"/>
    <property type="evidence" value="ECO:0007669"/>
    <property type="project" value="UniProtKB-SubCell"/>
</dbReference>
<dbReference type="GO" id="GO:0000175">
    <property type="term" value="F:3'-5'-RNA exonuclease activity"/>
    <property type="evidence" value="ECO:0007669"/>
    <property type="project" value="InterPro"/>
</dbReference>
<dbReference type="GO" id="GO:0003676">
    <property type="term" value="F:nucleic acid binding"/>
    <property type="evidence" value="ECO:0007669"/>
    <property type="project" value="InterPro"/>
</dbReference>
<dbReference type="GO" id="GO:0006259">
    <property type="term" value="P:DNA metabolic process"/>
    <property type="evidence" value="ECO:0007669"/>
    <property type="project" value="UniProtKB-ARBA"/>
</dbReference>
<dbReference type="CDD" id="cd06135">
    <property type="entry name" value="Orn"/>
    <property type="match status" value="1"/>
</dbReference>
<dbReference type="FunFam" id="3.30.420.10:FF:000003">
    <property type="entry name" value="Oligoribonuclease"/>
    <property type="match status" value="1"/>
</dbReference>
<dbReference type="Gene3D" id="3.30.420.10">
    <property type="entry name" value="Ribonuclease H-like superfamily/Ribonuclease H"/>
    <property type="match status" value="1"/>
</dbReference>
<dbReference type="HAMAP" id="MF_00045">
    <property type="entry name" value="Oligoribonuclease"/>
    <property type="match status" value="1"/>
</dbReference>
<dbReference type="InterPro" id="IPR013520">
    <property type="entry name" value="Exonuclease_RNaseT/DNA_pol3"/>
</dbReference>
<dbReference type="InterPro" id="IPR022894">
    <property type="entry name" value="Oligoribonuclease"/>
</dbReference>
<dbReference type="InterPro" id="IPR012337">
    <property type="entry name" value="RNaseH-like_sf"/>
</dbReference>
<dbReference type="InterPro" id="IPR036397">
    <property type="entry name" value="RNaseH_sf"/>
</dbReference>
<dbReference type="NCBIfam" id="NF003765">
    <property type="entry name" value="PRK05359.1"/>
    <property type="match status" value="1"/>
</dbReference>
<dbReference type="PANTHER" id="PTHR11046">
    <property type="entry name" value="OLIGORIBONUCLEASE, MITOCHONDRIAL"/>
    <property type="match status" value="1"/>
</dbReference>
<dbReference type="PANTHER" id="PTHR11046:SF0">
    <property type="entry name" value="OLIGORIBONUCLEASE, MITOCHONDRIAL"/>
    <property type="match status" value="1"/>
</dbReference>
<dbReference type="Pfam" id="PF00929">
    <property type="entry name" value="RNase_T"/>
    <property type="match status" value="1"/>
</dbReference>
<dbReference type="SMART" id="SM00479">
    <property type="entry name" value="EXOIII"/>
    <property type="match status" value="1"/>
</dbReference>
<dbReference type="SUPFAM" id="SSF53098">
    <property type="entry name" value="Ribonuclease H-like"/>
    <property type="match status" value="1"/>
</dbReference>
<evidence type="ECO:0000255" key="1">
    <source>
        <dbReference type="HAMAP-Rule" id="MF_00045"/>
    </source>
</evidence>
<organism>
    <name type="scientific">Alkalilimnicola ehrlichii (strain ATCC BAA-1101 / DSM 17681 / MLHE-1)</name>
    <dbReference type="NCBI Taxonomy" id="187272"/>
    <lineage>
        <taxon>Bacteria</taxon>
        <taxon>Pseudomonadati</taxon>
        <taxon>Pseudomonadota</taxon>
        <taxon>Gammaproteobacteria</taxon>
        <taxon>Chromatiales</taxon>
        <taxon>Ectothiorhodospiraceae</taxon>
        <taxon>Alkalilimnicola</taxon>
    </lineage>
</organism>
<sequence length="193" mass="21878">MGFSEHNLVWLDLEMTGLDPDTDRIIEIATLVTDSQLNILAEGPVLAVRQSEQALAAMDEWNTRTHGESGLIERVRASHLDEAAAEAETLAFLRRWVPERASPMCGNSICQDRRFLYRYMPRLEAWFHYRNLDVSTLKLLANRWHPEVLQGFSKKATHQALEDIRESVAELRHYRAHFLRLPAAGAEGGGAAD</sequence>
<gene>
    <name evidence="1" type="primary">orn</name>
    <name type="ordered locus">Mlg_1502</name>
</gene>
<accession>Q0A8I6</accession>
<name>ORN_ALKEH</name>
<protein>
    <recommendedName>
        <fullName evidence="1">Oligoribonuclease</fullName>
        <ecNumber evidence="1">3.1.15.-</ecNumber>
    </recommendedName>
</protein>
<comment type="function">
    <text evidence="1">3'-to-5' exoribonuclease specific for small oligoribonucleotides.</text>
</comment>
<comment type="subcellular location">
    <subcellularLocation>
        <location evidence="1">Cytoplasm</location>
    </subcellularLocation>
</comment>
<comment type="similarity">
    <text evidence="1">Belongs to the oligoribonuclease family.</text>
</comment>
<proteinExistence type="inferred from homology"/>
<reference key="1">
    <citation type="submission" date="2006-08" db="EMBL/GenBank/DDBJ databases">
        <title>Complete sequence of Alkalilimnicola ehrilichei MLHE-1.</title>
        <authorList>
            <person name="Copeland A."/>
            <person name="Lucas S."/>
            <person name="Lapidus A."/>
            <person name="Barry K."/>
            <person name="Detter J.C."/>
            <person name="Glavina del Rio T."/>
            <person name="Hammon N."/>
            <person name="Israni S."/>
            <person name="Dalin E."/>
            <person name="Tice H."/>
            <person name="Pitluck S."/>
            <person name="Sims D."/>
            <person name="Brettin T."/>
            <person name="Bruce D."/>
            <person name="Han C."/>
            <person name="Tapia R."/>
            <person name="Gilna P."/>
            <person name="Schmutz J."/>
            <person name="Larimer F."/>
            <person name="Land M."/>
            <person name="Hauser L."/>
            <person name="Kyrpides N."/>
            <person name="Mikhailova N."/>
            <person name="Oremland R.S."/>
            <person name="Hoeft S.E."/>
            <person name="Switzer-Blum J."/>
            <person name="Kulp T."/>
            <person name="King G."/>
            <person name="Tabita R."/>
            <person name="Witte B."/>
            <person name="Santini J.M."/>
            <person name="Basu P."/>
            <person name="Hollibaugh J.T."/>
            <person name="Xie G."/>
            <person name="Stolz J.F."/>
            <person name="Richardson P."/>
        </authorList>
    </citation>
    <scope>NUCLEOTIDE SEQUENCE [LARGE SCALE GENOMIC DNA]</scope>
    <source>
        <strain>ATCC BAA-1101 / DSM 17681 / MLHE-1</strain>
    </source>
</reference>
<keyword id="KW-0963">Cytoplasm</keyword>
<keyword id="KW-0269">Exonuclease</keyword>
<keyword id="KW-0378">Hydrolase</keyword>
<keyword id="KW-0540">Nuclease</keyword>
<keyword id="KW-1185">Reference proteome</keyword>